<organism>
    <name type="scientific">Escherichia coli O157:H7 (strain EC4115 / EHEC)</name>
    <dbReference type="NCBI Taxonomy" id="444450"/>
    <lineage>
        <taxon>Bacteria</taxon>
        <taxon>Pseudomonadati</taxon>
        <taxon>Pseudomonadota</taxon>
        <taxon>Gammaproteobacteria</taxon>
        <taxon>Enterobacterales</taxon>
        <taxon>Enterobacteriaceae</taxon>
        <taxon>Escherichia</taxon>
    </lineage>
</organism>
<evidence type="ECO:0000255" key="1">
    <source>
        <dbReference type="HAMAP-Rule" id="MF_01293"/>
    </source>
</evidence>
<reference key="1">
    <citation type="journal article" date="2011" name="Proc. Natl. Acad. Sci. U.S.A.">
        <title>Genomic anatomy of Escherichia coli O157:H7 outbreaks.</title>
        <authorList>
            <person name="Eppinger M."/>
            <person name="Mammel M.K."/>
            <person name="Leclerc J.E."/>
            <person name="Ravel J."/>
            <person name="Cebula T.A."/>
        </authorList>
    </citation>
    <scope>NUCLEOTIDE SEQUENCE [LARGE SCALE GENOMIC DNA]</scope>
    <source>
        <strain>EC4115 / EHEC</strain>
    </source>
</reference>
<accession>B5YS30</accession>
<keyword id="KW-0456">Lyase</keyword>
<keyword id="KW-0479">Metal-binding</keyword>
<keyword id="KW-0862">Zinc</keyword>
<sequence length="286" mass="31294">MSIISTKYLLQDAQANGYAVPAFNIHNAETIQAILEVCSEMRSPVILAGTPGTFKHIALEEIYALCSAYSTTYNMPLALHLDHHESLDDIRRKVHAGVRSAMIDGSHFPFAENVKLVKSVVDFCHSQDCSVEAELGRLGGVEDDMSVDAESAFLTDPQEAKRFVELTGVDSLAVAIGTAHGLYSKTPKIDFQRLAEIREVVDVPLVLHGASDVPDEFVRRTIELGVTKVNVATELKIAFAGAVKAWFAENPQGNDPRYYMRVGMDAMKEVVRNKINVCGSANRISA</sequence>
<feature type="chain" id="PRO_1000140429" description="D-tagatose-1,6-bisphosphate aldolase subunit KbaY">
    <location>
        <begin position="1"/>
        <end position="286"/>
    </location>
</feature>
<feature type="active site" description="Proton donor" evidence="1">
    <location>
        <position position="82"/>
    </location>
</feature>
<feature type="binding site" evidence="1">
    <location>
        <position position="83"/>
    </location>
    <ligand>
        <name>Zn(2+)</name>
        <dbReference type="ChEBI" id="CHEBI:29105"/>
        <note>catalytic</note>
    </ligand>
</feature>
<feature type="binding site" evidence="1">
    <location>
        <position position="180"/>
    </location>
    <ligand>
        <name>Zn(2+)</name>
        <dbReference type="ChEBI" id="CHEBI:29105"/>
        <note>catalytic</note>
    </ligand>
</feature>
<feature type="binding site" evidence="1">
    <location>
        <position position="181"/>
    </location>
    <ligand>
        <name>dihydroxyacetone phosphate</name>
        <dbReference type="ChEBI" id="CHEBI:57642"/>
    </ligand>
</feature>
<feature type="binding site" evidence="1">
    <location>
        <position position="208"/>
    </location>
    <ligand>
        <name>Zn(2+)</name>
        <dbReference type="ChEBI" id="CHEBI:29105"/>
        <note>catalytic</note>
    </ligand>
</feature>
<feature type="binding site" evidence="1">
    <location>
        <begin position="209"/>
        <end position="211"/>
    </location>
    <ligand>
        <name>dihydroxyacetone phosphate</name>
        <dbReference type="ChEBI" id="CHEBI:57642"/>
    </ligand>
</feature>
<feature type="binding site" evidence="1">
    <location>
        <begin position="230"/>
        <end position="233"/>
    </location>
    <ligand>
        <name>dihydroxyacetone phosphate</name>
        <dbReference type="ChEBI" id="CHEBI:57642"/>
    </ligand>
</feature>
<name>KBAY_ECO5E</name>
<dbReference type="EC" id="4.1.2.40" evidence="1"/>
<dbReference type="EMBL" id="CP001164">
    <property type="protein sequence ID" value="ACI38706.1"/>
    <property type="molecule type" value="Genomic_DNA"/>
</dbReference>
<dbReference type="RefSeq" id="WP_000022766.1">
    <property type="nucleotide sequence ID" value="NC_011353.1"/>
</dbReference>
<dbReference type="SMR" id="B5YS30"/>
<dbReference type="GeneID" id="75203745"/>
<dbReference type="KEGG" id="ecf:ECH74115_4454"/>
<dbReference type="HOGENOM" id="CLU_040088_0_1_6"/>
<dbReference type="UniPathway" id="UPA00704">
    <property type="reaction ID" value="UER00716"/>
</dbReference>
<dbReference type="GO" id="GO:0005829">
    <property type="term" value="C:cytosol"/>
    <property type="evidence" value="ECO:0007669"/>
    <property type="project" value="TreeGrafter"/>
</dbReference>
<dbReference type="GO" id="GO:0009025">
    <property type="term" value="F:tagatose-bisphosphate aldolase activity"/>
    <property type="evidence" value="ECO:0007669"/>
    <property type="project" value="UniProtKB-UniRule"/>
</dbReference>
<dbReference type="GO" id="GO:0008270">
    <property type="term" value="F:zinc ion binding"/>
    <property type="evidence" value="ECO:0007669"/>
    <property type="project" value="UniProtKB-UniRule"/>
</dbReference>
<dbReference type="GO" id="GO:0005975">
    <property type="term" value="P:carbohydrate metabolic process"/>
    <property type="evidence" value="ECO:0007669"/>
    <property type="project" value="InterPro"/>
</dbReference>
<dbReference type="GO" id="GO:2001059">
    <property type="term" value="P:D-tagatose 6-phosphate catabolic process"/>
    <property type="evidence" value="ECO:0007669"/>
    <property type="project" value="UniProtKB-UniRule"/>
</dbReference>
<dbReference type="CDD" id="cd00453">
    <property type="entry name" value="FTBP_aldolase_II"/>
    <property type="match status" value="1"/>
</dbReference>
<dbReference type="FunFam" id="3.20.20.70:FF:000043">
    <property type="entry name" value="D-tagatose-1,6-bisphosphate aldolase subunit GatY"/>
    <property type="match status" value="1"/>
</dbReference>
<dbReference type="Gene3D" id="3.20.20.70">
    <property type="entry name" value="Aldolase class I"/>
    <property type="match status" value="1"/>
</dbReference>
<dbReference type="HAMAP" id="MF_01293">
    <property type="entry name" value="TagBP_aldolase_KbaY"/>
    <property type="match status" value="1"/>
</dbReference>
<dbReference type="InterPro" id="IPR013785">
    <property type="entry name" value="Aldolase_TIM"/>
</dbReference>
<dbReference type="InterPro" id="IPR050246">
    <property type="entry name" value="Class_II_FBP_aldolase"/>
</dbReference>
<dbReference type="InterPro" id="IPR000771">
    <property type="entry name" value="FBA_II"/>
</dbReference>
<dbReference type="InterPro" id="IPR023788">
    <property type="entry name" value="TagBP_ald_KbaY"/>
</dbReference>
<dbReference type="InterPro" id="IPR011288">
    <property type="entry name" value="TagBP_ald_KbaY/GatY"/>
</dbReference>
<dbReference type="NCBIfam" id="TIGR00167">
    <property type="entry name" value="cbbA"/>
    <property type="match status" value="1"/>
</dbReference>
<dbReference type="NCBIfam" id="NF006626">
    <property type="entry name" value="PRK09195.1"/>
    <property type="match status" value="1"/>
</dbReference>
<dbReference type="NCBIfam" id="NF009374">
    <property type="entry name" value="PRK12737.1"/>
    <property type="match status" value="1"/>
</dbReference>
<dbReference type="NCBIfam" id="NF009375">
    <property type="entry name" value="PRK12738.1"/>
    <property type="match status" value="1"/>
</dbReference>
<dbReference type="NCBIfam" id="TIGR01858">
    <property type="entry name" value="tag_bisphos_ald"/>
    <property type="match status" value="1"/>
</dbReference>
<dbReference type="PANTHER" id="PTHR30304">
    <property type="entry name" value="D-TAGATOSE-1,6-BISPHOSPHATE ALDOLASE"/>
    <property type="match status" value="1"/>
</dbReference>
<dbReference type="PANTHER" id="PTHR30304:SF0">
    <property type="entry name" value="D-TAGATOSE-1,6-BISPHOSPHATE ALDOLASE SUBUNIT GATY-RELATED"/>
    <property type="match status" value="1"/>
</dbReference>
<dbReference type="Pfam" id="PF01116">
    <property type="entry name" value="F_bP_aldolase"/>
    <property type="match status" value="1"/>
</dbReference>
<dbReference type="PIRSF" id="PIRSF001359">
    <property type="entry name" value="F_bP_aldolase_II"/>
    <property type="match status" value="1"/>
</dbReference>
<dbReference type="SUPFAM" id="SSF51569">
    <property type="entry name" value="Aldolase"/>
    <property type="match status" value="1"/>
</dbReference>
<dbReference type="PROSITE" id="PS00602">
    <property type="entry name" value="ALDOLASE_CLASS_II_1"/>
    <property type="match status" value="1"/>
</dbReference>
<dbReference type="PROSITE" id="PS00806">
    <property type="entry name" value="ALDOLASE_CLASS_II_2"/>
    <property type="match status" value="1"/>
</dbReference>
<proteinExistence type="inferred from homology"/>
<comment type="function">
    <text evidence="1">Catalytic subunit of the tagatose-1,6-bisphosphate aldolase KbaYZ, which catalyzes the reversible aldol condensation of dihydroxyacetone phosphate (DHAP or glycerone-phosphate) with glyceraldehyde 3-phosphate (G3P) to produce tagatose 1,6-bisphosphate (TBP). Requires KbaZ subunit for full activity and stability.</text>
</comment>
<comment type="catalytic activity">
    <reaction evidence="1">
        <text>D-tagatofuranose 1,6-bisphosphate = D-glyceraldehyde 3-phosphate + dihydroxyacetone phosphate</text>
        <dbReference type="Rhea" id="RHEA:22948"/>
        <dbReference type="ChEBI" id="CHEBI:57642"/>
        <dbReference type="ChEBI" id="CHEBI:58694"/>
        <dbReference type="ChEBI" id="CHEBI:59776"/>
        <dbReference type="EC" id="4.1.2.40"/>
    </reaction>
</comment>
<comment type="cofactor">
    <cofactor evidence="1">
        <name>Zn(2+)</name>
        <dbReference type="ChEBI" id="CHEBI:29105"/>
    </cofactor>
    <text evidence="1">Binds 1 zinc ion per subunit.</text>
</comment>
<comment type="pathway">
    <text evidence="1">Carbohydrate metabolism; D-tagatose 6-phosphate degradation; D-glyceraldehyde 3-phosphate and glycerone phosphate from D-tagatose 6-phosphate: step 2/2.</text>
</comment>
<comment type="subunit">
    <text evidence="1">Homotetramer. Forms a complex with KbaZ.</text>
</comment>
<comment type="similarity">
    <text evidence="1">Belongs to the class II fructose-bisphosphate aldolase family. TagBP aldolase KbaY subfamily.</text>
</comment>
<protein>
    <recommendedName>
        <fullName evidence="1">D-tagatose-1,6-bisphosphate aldolase subunit KbaY</fullName>
        <shortName evidence="1">TBPA</shortName>
        <shortName evidence="1">TagBP aldolase</shortName>
        <ecNumber evidence="1">4.1.2.40</ecNumber>
    </recommendedName>
    <alternativeName>
        <fullName evidence="1">D-tagatose-bisphosphate aldolase class II</fullName>
    </alternativeName>
    <alternativeName>
        <fullName evidence="1">Ketose 1,6-bisphosphate aldolase class II</fullName>
    </alternativeName>
    <alternativeName>
        <fullName evidence="1">Tagatose-bisphosphate aldolase</fullName>
    </alternativeName>
</protein>
<gene>
    <name evidence="1" type="primary">kbaY</name>
    <name type="ordered locus">ECH74115_4454</name>
</gene>